<organism>
    <name type="scientific">Rhizobium etli (strain ATCC 51251 / DSM 11541 / JCM 21823 / NBRC 15573 / CFN 42)</name>
    <dbReference type="NCBI Taxonomy" id="347834"/>
    <lineage>
        <taxon>Bacteria</taxon>
        <taxon>Pseudomonadati</taxon>
        <taxon>Pseudomonadota</taxon>
        <taxon>Alphaproteobacteria</taxon>
        <taxon>Hyphomicrobiales</taxon>
        <taxon>Rhizobiaceae</taxon>
        <taxon>Rhizobium/Agrobacterium group</taxon>
        <taxon>Rhizobium</taxon>
    </lineage>
</organism>
<feature type="chain" id="PRO_1000060640" description="Integration host factor subunit beta">
    <location>
        <begin position="1"/>
        <end position="99"/>
    </location>
</feature>
<proteinExistence type="inferred from homology"/>
<protein>
    <recommendedName>
        <fullName evidence="1">Integration host factor subunit beta</fullName>
        <shortName evidence="1">IHF-beta</shortName>
    </recommendedName>
</protein>
<reference key="1">
    <citation type="journal article" date="2006" name="Proc. Natl. Acad. Sci. U.S.A.">
        <title>The partitioned Rhizobium etli genome: genetic and metabolic redundancy in seven interacting replicons.</title>
        <authorList>
            <person name="Gonzalez V."/>
            <person name="Santamaria R.I."/>
            <person name="Bustos P."/>
            <person name="Hernandez-Gonzalez I."/>
            <person name="Medrano-Soto A."/>
            <person name="Moreno-Hagelsieb G."/>
            <person name="Janga S.C."/>
            <person name="Ramirez M.A."/>
            <person name="Jimenez-Jacinto V."/>
            <person name="Collado-Vides J."/>
            <person name="Davila G."/>
        </authorList>
    </citation>
    <scope>NUCLEOTIDE SEQUENCE [LARGE SCALE GENOMIC DNA]</scope>
    <source>
        <strain>ATCC 51251 / DSM 11541 / JCM 21823 / NBRC 15573 / CFN 42</strain>
    </source>
</reference>
<evidence type="ECO:0000255" key="1">
    <source>
        <dbReference type="HAMAP-Rule" id="MF_00381"/>
    </source>
</evidence>
<name>IHFB_RHIEC</name>
<keyword id="KW-0233">DNA recombination</keyword>
<keyword id="KW-0238">DNA-binding</keyword>
<keyword id="KW-1185">Reference proteome</keyword>
<keyword id="KW-0804">Transcription</keyword>
<keyword id="KW-0805">Transcription regulation</keyword>
<keyword id="KW-0810">Translation regulation</keyword>
<accession>Q2KD65</accession>
<dbReference type="EMBL" id="CP000133">
    <property type="protein sequence ID" value="ABC89221.1"/>
    <property type="molecule type" value="Genomic_DNA"/>
</dbReference>
<dbReference type="RefSeq" id="WP_003544934.1">
    <property type="nucleotide sequence ID" value="NC_007761.1"/>
</dbReference>
<dbReference type="SMR" id="Q2KD65"/>
<dbReference type="KEGG" id="ret:RHE_CH00399"/>
<dbReference type="eggNOG" id="COG0776">
    <property type="taxonomic scope" value="Bacteria"/>
</dbReference>
<dbReference type="HOGENOM" id="CLU_105066_2_0_5"/>
<dbReference type="OrthoDB" id="9804203at2"/>
<dbReference type="Proteomes" id="UP000001936">
    <property type="component" value="Chromosome"/>
</dbReference>
<dbReference type="GO" id="GO:0005694">
    <property type="term" value="C:chromosome"/>
    <property type="evidence" value="ECO:0007669"/>
    <property type="project" value="InterPro"/>
</dbReference>
<dbReference type="GO" id="GO:0005829">
    <property type="term" value="C:cytosol"/>
    <property type="evidence" value="ECO:0007669"/>
    <property type="project" value="TreeGrafter"/>
</dbReference>
<dbReference type="GO" id="GO:0003677">
    <property type="term" value="F:DNA binding"/>
    <property type="evidence" value="ECO:0007669"/>
    <property type="project" value="UniProtKB-UniRule"/>
</dbReference>
<dbReference type="GO" id="GO:0030527">
    <property type="term" value="F:structural constituent of chromatin"/>
    <property type="evidence" value="ECO:0007669"/>
    <property type="project" value="InterPro"/>
</dbReference>
<dbReference type="GO" id="GO:0006310">
    <property type="term" value="P:DNA recombination"/>
    <property type="evidence" value="ECO:0007669"/>
    <property type="project" value="UniProtKB-UniRule"/>
</dbReference>
<dbReference type="GO" id="GO:0006355">
    <property type="term" value="P:regulation of DNA-templated transcription"/>
    <property type="evidence" value="ECO:0007669"/>
    <property type="project" value="UniProtKB-UniRule"/>
</dbReference>
<dbReference type="GO" id="GO:0006417">
    <property type="term" value="P:regulation of translation"/>
    <property type="evidence" value="ECO:0007669"/>
    <property type="project" value="UniProtKB-UniRule"/>
</dbReference>
<dbReference type="CDD" id="cd13836">
    <property type="entry name" value="IHF_B"/>
    <property type="match status" value="1"/>
</dbReference>
<dbReference type="Gene3D" id="4.10.520.10">
    <property type="entry name" value="IHF-like DNA-binding proteins"/>
    <property type="match status" value="1"/>
</dbReference>
<dbReference type="HAMAP" id="MF_00381">
    <property type="entry name" value="IHF_beta"/>
    <property type="match status" value="1"/>
</dbReference>
<dbReference type="InterPro" id="IPR000119">
    <property type="entry name" value="Hist_DNA-bd"/>
</dbReference>
<dbReference type="InterPro" id="IPR020816">
    <property type="entry name" value="Histone-like_DNA-bd_CS"/>
</dbReference>
<dbReference type="InterPro" id="IPR010992">
    <property type="entry name" value="IHF-like_DNA-bd_dom_sf"/>
</dbReference>
<dbReference type="InterPro" id="IPR005685">
    <property type="entry name" value="IHF_beta"/>
</dbReference>
<dbReference type="NCBIfam" id="TIGR00988">
    <property type="entry name" value="hip"/>
    <property type="match status" value="1"/>
</dbReference>
<dbReference type="NCBIfam" id="NF001222">
    <property type="entry name" value="PRK00199.1"/>
    <property type="match status" value="1"/>
</dbReference>
<dbReference type="PANTHER" id="PTHR33175">
    <property type="entry name" value="DNA-BINDING PROTEIN HU"/>
    <property type="match status" value="1"/>
</dbReference>
<dbReference type="PANTHER" id="PTHR33175:SF5">
    <property type="entry name" value="INTEGRATION HOST FACTOR SUBUNIT BETA"/>
    <property type="match status" value="1"/>
</dbReference>
<dbReference type="Pfam" id="PF00216">
    <property type="entry name" value="Bac_DNA_binding"/>
    <property type="match status" value="1"/>
</dbReference>
<dbReference type="PRINTS" id="PR01727">
    <property type="entry name" value="DNABINDINGHU"/>
</dbReference>
<dbReference type="SMART" id="SM00411">
    <property type="entry name" value="BHL"/>
    <property type="match status" value="1"/>
</dbReference>
<dbReference type="SUPFAM" id="SSF47729">
    <property type="entry name" value="IHF-like DNA-binding proteins"/>
    <property type="match status" value="1"/>
</dbReference>
<dbReference type="PROSITE" id="PS00045">
    <property type="entry name" value="HISTONE_LIKE"/>
    <property type="match status" value="1"/>
</dbReference>
<gene>
    <name evidence="1" type="primary">ihfB</name>
    <name evidence="1" type="synonym">himD</name>
    <name type="ordered locus">RHE_CH00399</name>
</gene>
<comment type="function">
    <text evidence="1">This protein is one of the two subunits of integration host factor, a specific DNA-binding protein that functions in genetic recombination as well as in transcriptional and translational control.</text>
</comment>
<comment type="subunit">
    <text evidence="1">Heterodimer of an alpha and a beta chain.</text>
</comment>
<comment type="similarity">
    <text evidence="1">Belongs to the bacterial histone-like protein family.</text>
</comment>
<sequence>MIKSELVQIVAARNPHLYHRDVENIVNAVLDEITDALAAGNRVELRGFGAFSVKNRPSRSGRNPRTGDTVFVEEKWVPFFKTGKELRERLNPGQADEED</sequence>